<keyword id="KW-0007">Acetylation</keyword>
<keyword id="KW-0044">Antibiotic</keyword>
<keyword id="KW-0929">Antimicrobial</keyword>
<keyword id="KW-0078">Bacteriocin</keyword>
<keyword id="KW-0903">Direct protein sequencing</keyword>
<keyword id="KW-0425">Lantibiotic</keyword>
<keyword id="KW-0964">Secreted</keyword>
<keyword id="KW-0883">Thioether bond</keyword>
<protein>
    <recommendedName>
        <fullName evidence="5">Lantibiotic paenibacillin</fullName>
    </recommendedName>
</protein>
<sequence>MKVDQMFDLDLRKSYEASELSPQASIIKTTIKVSKAVCKTLTCICTGSCSNCK</sequence>
<dbReference type="EMBL" id="JQ728481">
    <property type="protein sequence ID" value="AFS60100.1"/>
    <property type="molecule type" value="Genomic_DNA"/>
</dbReference>
<dbReference type="iPTMnet" id="P86013"/>
<dbReference type="GO" id="GO:0005576">
    <property type="term" value="C:extracellular region"/>
    <property type="evidence" value="ECO:0000314"/>
    <property type="project" value="UniProtKB"/>
</dbReference>
<dbReference type="GO" id="GO:0005102">
    <property type="term" value="F:signaling receptor binding"/>
    <property type="evidence" value="ECO:0007669"/>
    <property type="project" value="UniProtKB-KW"/>
</dbReference>
<dbReference type="GO" id="GO:0051838">
    <property type="term" value="P:cytolysis by host of symbiont cells"/>
    <property type="evidence" value="ECO:0000314"/>
    <property type="project" value="UniProtKB"/>
</dbReference>
<dbReference type="GO" id="GO:0050830">
    <property type="term" value="P:defense response to Gram-positive bacterium"/>
    <property type="evidence" value="ECO:0000314"/>
    <property type="project" value="UniProtKB"/>
</dbReference>
<dbReference type="NCBIfam" id="NF038155">
    <property type="entry name" value="lanthi_I_FDLD"/>
    <property type="match status" value="1"/>
</dbReference>
<dbReference type="NCBIfam" id="NF047830">
    <property type="entry name" value="lanti_ElxA"/>
    <property type="match status" value="1"/>
</dbReference>
<evidence type="ECO:0000255" key="1"/>
<evidence type="ECO:0000269" key="2">
    <source>
    </source>
</evidence>
<evidence type="ECO:0000269" key="3">
    <source>
    </source>
</evidence>
<evidence type="ECO:0000269" key="4">
    <source ref="1"/>
</evidence>
<evidence type="ECO:0000303" key="5">
    <source>
    </source>
</evidence>
<evidence type="ECO:0000305" key="6"/>
<evidence type="ECO:0000312" key="7">
    <source>
        <dbReference type="EMBL" id="AFS60100.1"/>
    </source>
</evidence>
<gene>
    <name evidence="7" type="primary">paenA</name>
</gene>
<organism>
    <name type="scientific">Paenibacillus polymyxa</name>
    <name type="common">Bacillus polymyxa</name>
    <dbReference type="NCBI Taxonomy" id="1406"/>
    <lineage>
        <taxon>Bacteria</taxon>
        <taxon>Bacillati</taxon>
        <taxon>Bacillota</taxon>
        <taxon>Bacilli</taxon>
        <taxon>Bacillales</taxon>
        <taxon>Paenibacillaceae</taxon>
        <taxon>Paenibacillus</taxon>
    </lineage>
</organism>
<proteinExistence type="evidence at protein level"/>
<reference key="1">
    <citation type="submission" date="2012-02" db="EMBL/GenBank/DDBJ databases">
        <title>Biosynthesis of the antimicrobial peptide paenibacillin in Paenibacillus polymyxa OSY-DF.</title>
        <authorList>
            <person name="Huang E."/>
            <person name="Yousef A.E."/>
        </authorList>
    </citation>
    <scope>NUCLEOTIDE SEQUENCE [GENOMIC DNA]</scope>
    <source>
        <strain>OSY-DF</strain>
    </source>
</reference>
<reference evidence="6" key="2">
    <citation type="journal article" date="2007" name="Appl. Environ. Microbiol.">
        <title>Isolation and identification of a Paenibacillus polymyxa strain that coproduces a novel lantibiotic and polymyxin.</title>
        <authorList>
            <person name="He Z."/>
            <person name="Kisla D."/>
            <person name="Zhang L."/>
            <person name="Yuan C."/>
            <person name="Green-Church K.B."/>
            <person name="Yousef A.E."/>
        </authorList>
    </citation>
    <scope>PROTEIN SEQUENCE</scope>
    <scope>FUNCTION</scope>
    <scope>SUBCELLULAR LOCATION</scope>
    <scope>POST-TRANSLATIONAL MODIFICATIONS</scope>
    <scope>MASS SPECTROMETRY</scope>
    <source>
        <strain evidence="2">OSY-DF</strain>
    </source>
</reference>
<reference key="3">
    <citation type="journal article" date="2008" name="FEBS Lett.">
        <title>N-terminal acetylation in paenibacillin, a novel lantibiotic.</title>
        <authorList>
            <person name="He Z."/>
            <person name="Yuan C."/>
            <person name="Zhang L."/>
            <person name="Yousef A.E."/>
        </authorList>
    </citation>
    <scope>SUBCELLULAR LOCATION</scope>
    <scope>MASS SPECTROMETRY</scope>
    <scope>STRUCTURE BY NMR OF 24-53</scope>
    <scope>ACETYLATION AT ALA-24</scope>
    <scope>DEHYDRATION AT SER-25; THR-29; THR-30 AND SER-50</scope>
    <scope>LANTHIONINE CROSS-LINKS</scope>
    <source>
        <strain evidence="3">OSY-DF</strain>
    </source>
</reference>
<accession>P86013</accession>
<accession>M1FLQ2</accession>
<name>LANPA_PAEPO</name>
<comment type="function">
    <text evidence="2">Lanthionine-containing peptide antibiotic (lantibiotic) active on Gram-positive bacteria. The bactericidal activity of lantibiotics is based on depolarization of energized bacterial cytoplasmic membranes, initiated by the formation of aqueous transmembrane pores. Lacks antibacterial activity against Gram-negative bacteria.</text>
</comment>
<comment type="subcellular location">
    <subcellularLocation>
        <location evidence="2 3">Secreted</location>
    </subcellularLocation>
</comment>
<comment type="PTM">
    <text evidence="2">Maturation of lantibiotics involves the enzymatic conversion of Thr, and Ser into dehydrated AA and the formation of thioether bonds with cysteine. This is followed by membrane translocation and cleavage of the modified precursor.</text>
</comment>
<comment type="PTM">
    <text>The structure of the 2,3-didehydrobutyrines is not discussed in PubMed:17071789.</text>
</comment>
<comment type="mass spectrometry"/>
<comment type="mass spectrometry"/>
<comment type="mass spectrometry"/>
<comment type="similarity">
    <text evidence="1">Belongs to the type A lantibiotic family.</text>
</comment>
<feature type="propeptide" id="PRO_0000450323" evidence="4">
    <location>
        <begin position="1"/>
        <end position="24"/>
    </location>
</feature>
<feature type="peptide" id="PRO_0000352649" description="Lantibiotic paenibacillin" evidence="2">
    <location>
        <begin position="24"/>
        <end position="53"/>
    </location>
</feature>
<feature type="modified residue" description="N-acetylalanine" evidence="3">
    <location>
        <position position="24"/>
    </location>
</feature>
<feature type="modified residue" description="2,3-didehydroalanine (Ser)" evidence="3">
    <location>
        <position position="25"/>
    </location>
</feature>
<feature type="modified residue" description="2,3-didehydrobutyrine" evidence="3">
    <location>
        <position position="29"/>
    </location>
</feature>
<feature type="modified residue" description="2,3-didehydrobutyrine" evidence="3">
    <location>
        <position position="30"/>
    </location>
</feature>
<feature type="modified residue" description="2,3-didehydroalanine (Ser)" evidence="3">
    <location>
        <position position="50"/>
    </location>
</feature>
<feature type="cross-link" description="Lanthionine (Ser-Cys)" evidence="3">
    <location>
        <begin position="34"/>
        <end position="38"/>
    </location>
</feature>
<feature type="cross-link" description="Beta-methyllanthionine (Thr-Cys)" evidence="3">
    <location>
        <begin position="40"/>
        <end position="43"/>
    </location>
</feature>
<feature type="cross-link" description="Beta-methyllanthionine (Thr-Cys)" evidence="3">
    <location>
        <begin position="42"/>
        <end position="45"/>
    </location>
</feature>
<feature type="cross-link" description="Beta-methyllanthionine (Thr-Cys)" evidence="3">
    <location>
        <begin position="46"/>
        <end position="49"/>
    </location>
</feature>
<feature type="cross-link" description="Lanthionine (Ser-Cys)" evidence="3">
    <location>
        <begin position="48"/>
        <end position="52"/>
    </location>
</feature>